<gene>
    <name type="primary">glb-1</name>
    <name type="synonym">cbg-1</name>
    <name type="synonym">glo</name>
    <name type="ORF">ZK637.13</name>
</gene>
<dbReference type="EMBL" id="Z18264">
    <property type="protein sequence ID" value="CAA79148.1"/>
    <property type="molecule type" value="mRNA"/>
</dbReference>
<dbReference type="EMBL" id="S66164">
    <property type="protein sequence ID" value="AAB28512.3"/>
    <property type="molecule type" value="mRNA"/>
</dbReference>
<dbReference type="EMBL" id="Z11115">
    <property type="protein sequence ID" value="CAA77458.2"/>
    <property type="molecule type" value="Genomic_DNA"/>
</dbReference>
<dbReference type="PIR" id="JC1516">
    <property type="entry name" value="JC1516"/>
</dbReference>
<dbReference type="PIR" id="T41748">
    <property type="entry name" value="T41748"/>
</dbReference>
<dbReference type="RefSeq" id="NP_498974.2">
    <property type="nucleotide sequence ID" value="NM_066573.6"/>
</dbReference>
<dbReference type="PDB" id="2WTG">
    <property type="method" value="X-ray"/>
    <property type="resolution" value="1.50 A"/>
    <property type="chains" value="A=1-159"/>
</dbReference>
<dbReference type="PDB" id="2WTH">
    <property type="method" value="X-ray"/>
    <property type="resolution" value="2.80 A"/>
    <property type="chains" value="A/B=1-159"/>
</dbReference>
<dbReference type="PDBsum" id="2WTG"/>
<dbReference type="PDBsum" id="2WTH"/>
<dbReference type="SMR" id="P30627"/>
<dbReference type="BioGRID" id="41462">
    <property type="interactions" value="35"/>
</dbReference>
<dbReference type="FunCoup" id="P30627">
    <property type="interactions" value="88"/>
</dbReference>
<dbReference type="STRING" id="6239.ZK637.13.1"/>
<dbReference type="PaxDb" id="6239-ZK637.13.1"/>
<dbReference type="PeptideAtlas" id="P30627"/>
<dbReference type="EnsemblMetazoa" id="ZK637.13.1">
    <property type="protein sequence ID" value="ZK637.13.1"/>
    <property type="gene ID" value="WBGene00014030"/>
</dbReference>
<dbReference type="GeneID" id="176261"/>
<dbReference type="KEGG" id="cel:CELE_ZK637.13"/>
<dbReference type="AGR" id="WB:WBGene00014030"/>
<dbReference type="CTD" id="176261"/>
<dbReference type="WormBase" id="ZK637.13">
    <property type="protein sequence ID" value="CE36418"/>
    <property type="gene ID" value="WBGene00014030"/>
    <property type="gene designation" value="glb-1"/>
</dbReference>
<dbReference type="eggNOG" id="ENOG502SFTY">
    <property type="taxonomic scope" value="Eukaryota"/>
</dbReference>
<dbReference type="HOGENOM" id="CLU_099979_0_0_1"/>
<dbReference type="InParanoid" id="P30627"/>
<dbReference type="OMA" id="DPALWMA"/>
<dbReference type="OrthoDB" id="5820458at2759"/>
<dbReference type="EvolutionaryTrace" id="P30627"/>
<dbReference type="PRO" id="PR:P30627"/>
<dbReference type="Proteomes" id="UP000001940">
    <property type="component" value="Chromosome III"/>
</dbReference>
<dbReference type="Bgee" id="WBGene00014030">
    <property type="expression patterns" value="Expressed in pharyngeal muscle cell (C elegans) and 4 other cell types or tissues"/>
</dbReference>
<dbReference type="GO" id="GO:0005737">
    <property type="term" value="C:cytoplasm"/>
    <property type="evidence" value="ECO:0007669"/>
    <property type="project" value="UniProtKB-SubCell"/>
</dbReference>
<dbReference type="GO" id="GO:0020037">
    <property type="term" value="F:heme binding"/>
    <property type="evidence" value="ECO:0007669"/>
    <property type="project" value="InterPro"/>
</dbReference>
<dbReference type="GO" id="GO:0005506">
    <property type="term" value="F:iron ion binding"/>
    <property type="evidence" value="ECO:0007669"/>
    <property type="project" value="InterPro"/>
</dbReference>
<dbReference type="GO" id="GO:0019825">
    <property type="term" value="F:oxygen binding"/>
    <property type="evidence" value="ECO:0007669"/>
    <property type="project" value="InterPro"/>
</dbReference>
<dbReference type="GO" id="GO:0005344">
    <property type="term" value="F:oxygen carrier activity"/>
    <property type="evidence" value="ECO:0007669"/>
    <property type="project" value="UniProtKB-KW"/>
</dbReference>
<dbReference type="CDD" id="cd01040">
    <property type="entry name" value="Mb-like"/>
    <property type="match status" value="1"/>
</dbReference>
<dbReference type="Gene3D" id="1.10.490.10">
    <property type="entry name" value="Globins"/>
    <property type="match status" value="1"/>
</dbReference>
<dbReference type="InterPro" id="IPR000971">
    <property type="entry name" value="Globin"/>
</dbReference>
<dbReference type="InterPro" id="IPR009050">
    <property type="entry name" value="Globin-like_sf"/>
</dbReference>
<dbReference type="InterPro" id="IPR012292">
    <property type="entry name" value="Globin/Proto"/>
</dbReference>
<dbReference type="InterPro" id="IPR012085">
    <property type="entry name" value="Globin_nematode"/>
</dbReference>
<dbReference type="InterPro" id="IPR044399">
    <property type="entry name" value="Mb-like_M"/>
</dbReference>
<dbReference type="Pfam" id="PF00042">
    <property type="entry name" value="Globin"/>
    <property type="match status" value="1"/>
</dbReference>
<dbReference type="PIRSF" id="PIRSF002026">
    <property type="entry name" value="Nematode_globin"/>
    <property type="match status" value="1"/>
</dbReference>
<dbReference type="SUPFAM" id="SSF46458">
    <property type="entry name" value="Globin-like"/>
    <property type="match status" value="1"/>
</dbReference>
<dbReference type="PROSITE" id="PS01033">
    <property type="entry name" value="GLOBIN"/>
    <property type="match status" value="1"/>
</dbReference>
<protein>
    <recommendedName>
        <fullName>Globin-like protein</fullName>
    </recommendedName>
</protein>
<evidence type="ECO:0000250" key="1"/>
<evidence type="ECO:0000255" key="2">
    <source>
        <dbReference type="PROSITE-ProRule" id="PRU00238"/>
    </source>
</evidence>
<evidence type="ECO:0000269" key="3">
    <source>
    </source>
</evidence>
<evidence type="ECO:0000305" key="4"/>
<evidence type="ECO:0007829" key="5">
    <source>
        <dbReference type="PDB" id="2WTG"/>
    </source>
</evidence>
<evidence type="ECO:0007829" key="6">
    <source>
        <dbReference type="PDB" id="2WTH"/>
    </source>
</evidence>
<organism>
    <name type="scientific">Caenorhabditis elegans</name>
    <dbReference type="NCBI Taxonomy" id="6239"/>
    <lineage>
        <taxon>Eukaryota</taxon>
        <taxon>Metazoa</taxon>
        <taxon>Ecdysozoa</taxon>
        <taxon>Nematoda</taxon>
        <taxon>Chromadorea</taxon>
        <taxon>Rhabditida</taxon>
        <taxon>Rhabditina</taxon>
        <taxon>Rhabditomorpha</taxon>
        <taxon>Rhabditoidea</taxon>
        <taxon>Rhabditidae</taxon>
        <taxon>Peloderinae</taxon>
        <taxon>Caenorhabditis</taxon>
    </lineage>
</organism>
<accession>P30627</accession>
<accession>Q26332</accession>
<comment type="function">
    <text evidence="1">May be a globin and may play a role in oxygen transport.</text>
</comment>
<comment type="subunit">
    <text evidence="3">Homodimer.</text>
</comment>
<comment type="subcellular location">
    <subcellularLocation>
        <location evidence="3">Cytoplasm</location>
    </subcellularLocation>
</comment>
<comment type="tissue specificity">
    <text evidence="3">Expressed mainly in a subset of neuronal cells and in head muscular tissue.</text>
</comment>
<comment type="induction">
    <text evidence="3">By hypoxia.</text>
</comment>
<comment type="similarity">
    <text evidence="4">Belongs to the globin family.</text>
</comment>
<comment type="caution">
    <text evidence="4">It is uncertain whether Met-1 or Met-3 is the initiator.</text>
</comment>
<proteinExistence type="evidence at protein level"/>
<sequence>MSMNRQEISDLCVKSLEGRMVGTEAQNIENGNAFYRYFFTNFPDLRVYFKGAEKYTADDVKKSERFDKQGQRILLACHLLANVYTNEEVFKGYVRETINRHRIYKMDPALWMAFFTVFTGYLESVGCLNDQQKAAWMALGKEFNAESQTHLKNSNLPHV</sequence>
<reference key="1">
    <citation type="journal article" date="1993" name="Gene">
        <title>Novel gene structure and evolutionary context of Caenorhabditis elegans globin.</title>
        <authorList>
            <person name="Kloek A.P."/>
            <person name="Sherman D.R."/>
            <person name="Goldberg D.E."/>
        </authorList>
    </citation>
    <scope>NUCLEOTIDE SEQUENCE [MRNA]</scope>
</reference>
<reference key="2">
    <citation type="journal article" date="1993" name="Biochem. Mol. Biol. Int.">
        <title>Expression of a globin gene in Caenorhabditis elegans.</title>
        <authorList>
            <person name="Mansell J.B."/>
            <person name="Timms K."/>
            <person name="Tate W.P."/>
            <person name="Moens L."/>
            <person name="Trotman C.N."/>
        </authorList>
    </citation>
    <scope>NUCLEOTIDE SEQUENCE [MRNA]</scope>
</reference>
<reference key="3">
    <citation type="journal article" date="1992" name="Nature">
        <title>The C. elegans genome sequencing project: a beginning.</title>
        <authorList>
            <person name="Sulston J."/>
            <person name="Du Z."/>
            <person name="Thomas K."/>
            <person name="Wilson R."/>
            <person name="Hillier L."/>
            <person name="Staden R."/>
            <person name="Halloran N."/>
            <person name="Green P."/>
            <person name="Thierry-Mieg J."/>
            <person name="Qiu L."/>
            <person name="Dear S."/>
            <person name="Coulson A."/>
            <person name="Craxton M."/>
            <person name="Durbin R."/>
            <person name="Berks M."/>
            <person name="Metzstein M."/>
            <person name="Hawkins T."/>
            <person name="Ainscough R."/>
            <person name="Waterston R."/>
        </authorList>
    </citation>
    <scope>NUCLEOTIDE SEQUENCE [LARGE SCALE GENOMIC DNA]</scope>
    <source>
        <strain>Bristol N2</strain>
    </source>
</reference>
<reference key="4">
    <citation type="journal article" date="1998" name="Science">
        <title>Genome sequence of the nematode C. elegans: a platform for investigating biology.</title>
        <authorList>
            <consortium name="The C. elegans sequencing consortium"/>
        </authorList>
    </citation>
    <scope>NUCLEOTIDE SEQUENCE [LARGE SCALE GENOMIC DNA]</scope>
    <source>
        <strain>Bristol N2</strain>
    </source>
</reference>
<reference key="5">
    <citation type="journal article" date="2010" name="BMC Biochem.">
        <title>Globin-like proteins in Caenorhabditis elegans: in vivo localization, ligand binding and structural properties.</title>
        <authorList>
            <person name="Geuens E."/>
            <person name="Hoogewijs D."/>
            <person name="Nardini M."/>
            <person name="Vinck E."/>
            <person name="Pesce A."/>
            <person name="Kiger L."/>
            <person name="Fago A."/>
            <person name="Tilleman L."/>
            <person name="De Henau S."/>
            <person name="Marden M.C."/>
            <person name="Weber R.E."/>
            <person name="Van Doorslaer S."/>
            <person name="Vanfleteren J."/>
            <person name="Moens L."/>
            <person name="Bolognesi M."/>
            <person name="Dewilde S."/>
        </authorList>
    </citation>
    <scope>X-RAY CRYSTALLOGRAPHY (1.5 ANGSTROMS)</scope>
    <scope>SUBUNIT</scope>
    <scope>SUBCELLULAR LOCATION</scope>
    <scope>TISSUE SPECIFICITY</scope>
    <scope>INDUCTION</scope>
    <scope>IRON-BINDING SITE</scope>
</reference>
<keyword id="KW-0002">3D-structure</keyword>
<keyword id="KW-0963">Cytoplasm</keyword>
<keyword id="KW-0349">Heme</keyword>
<keyword id="KW-0408">Iron</keyword>
<keyword id="KW-0479">Metal-binding</keyword>
<keyword id="KW-0561">Oxygen transport</keyword>
<keyword id="KW-1185">Reference proteome</keyword>
<keyword id="KW-0813">Transport</keyword>
<name>GLBH_CAEEL</name>
<feature type="chain" id="PRO_0000052463" description="Globin-like protein">
    <location>
        <begin position="1"/>
        <end position="159"/>
    </location>
</feature>
<feature type="domain" description="Globin" evidence="2">
    <location>
        <begin position="1"/>
        <end position="152"/>
    </location>
</feature>
<feature type="binding site" description="proximal binding residue">
    <location>
        <position position="101"/>
    </location>
    <ligand>
        <name>heme</name>
        <dbReference type="ChEBI" id="CHEBI:30413"/>
    </ligand>
    <ligandPart>
        <name>Fe</name>
        <dbReference type="ChEBI" id="CHEBI:18248"/>
    </ligandPart>
</feature>
<feature type="helix" evidence="5">
    <location>
        <begin position="5"/>
        <end position="15"/>
    </location>
</feature>
<feature type="helix" evidence="5">
    <location>
        <begin position="16"/>
        <end position="19"/>
    </location>
</feature>
<feature type="helix" evidence="5">
    <location>
        <begin position="25"/>
        <end position="41"/>
    </location>
</feature>
<feature type="helix" evidence="5">
    <location>
        <begin position="43"/>
        <end position="48"/>
    </location>
</feature>
<feature type="turn" evidence="6">
    <location>
        <begin position="50"/>
        <end position="54"/>
    </location>
</feature>
<feature type="helix" evidence="5">
    <location>
        <begin position="57"/>
        <end position="61"/>
    </location>
</feature>
<feature type="helix" evidence="5">
    <location>
        <begin position="64"/>
        <end position="83"/>
    </location>
</feature>
<feature type="helix" evidence="5">
    <location>
        <begin position="87"/>
        <end position="101"/>
    </location>
</feature>
<feature type="helix" evidence="5">
    <location>
        <begin position="102"/>
        <end position="104"/>
    </location>
</feature>
<feature type="helix" evidence="5">
    <location>
        <begin position="110"/>
        <end position="122"/>
    </location>
</feature>
<feature type="turn" evidence="5">
    <location>
        <begin position="123"/>
        <end position="125"/>
    </location>
</feature>
<feature type="helix" evidence="5">
    <location>
        <begin position="130"/>
        <end position="153"/>
    </location>
</feature>